<gene>
    <name evidence="1" type="primary">upp</name>
    <name type="ordered locus">PSPPH_1018</name>
</gene>
<keyword id="KW-0021">Allosteric enzyme</keyword>
<keyword id="KW-0328">Glycosyltransferase</keyword>
<keyword id="KW-0342">GTP-binding</keyword>
<keyword id="KW-0460">Magnesium</keyword>
<keyword id="KW-0547">Nucleotide-binding</keyword>
<keyword id="KW-0808">Transferase</keyword>
<accession>Q48MT3</accession>
<protein>
    <recommendedName>
        <fullName evidence="1">Uracil phosphoribosyltransferase</fullName>
        <ecNumber evidence="1">2.4.2.9</ecNumber>
    </recommendedName>
    <alternativeName>
        <fullName evidence="1">UMP pyrophosphorylase</fullName>
    </alternativeName>
    <alternativeName>
        <fullName evidence="1">UPRTase</fullName>
    </alternativeName>
</protein>
<comment type="function">
    <text evidence="1">Catalyzes the conversion of uracil and 5-phospho-alpha-D-ribose 1-diphosphate (PRPP) to UMP and diphosphate.</text>
</comment>
<comment type="catalytic activity">
    <reaction evidence="1">
        <text>UMP + diphosphate = 5-phospho-alpha-D-ribose 1-diphosphate + uracil</text>
        <dbReference type="Rhea" id="RHEA:13017"/>
        <dbReference type="ChEBI" id="CHEBI:17568"/>
        <dbReference type="ChEBI" id="CHEBI:33019"/>
        <dbReference type="ChEBI" id="CHEBI:57865"/>
        <dbReference type="ChEBI" id="CHEBI:58017"/>
        <dbReference type="EC" id="2.4.2.9"/>
    </reaction>
</comment>
<comment type="cofactor">
    <cofactor evidence="1">
        <name>Mg(2+)</name>
        <dbReference type="ChEBI" id="CHEBI:18420"/>
    </cofactor>
    <text evidence="1">Binds 1 Mg(2+) ion per subunit. The magnesium is bound as Mg-PRPP.</text>
</comment>
<comment type="activity regulation">
    <text evidence="1">Allosterically activated by GTP.</text>
</comment>
<comment type="pathway">
    <text evidence="1">Pyrimidine metabolism; UMP biosynthesis via salvage pathway; UMP from uracil: step 1/1.</text>
</comment>
<comment type="similarity">
    <text evidence="1">Belongs to the UPRTase family.</text>
</comment>
<reference key="1">
    <citation type="journal article" date="2005" name="J. Bacteriol.">
        <title>Whole-genome sequence analysis of Pseudomonas syringae pv. phaseolicola 1448A reveals divergence among pathovars in genes involved in virulence and transposition.</title>
        <authorList>
            <person name="Joardar V."/>
            <person name="Lindeberg M."/>
            <person name="Jackson R.W."/>
            <person name="Selengut J."/>
            <person name="Dodson R."/>
            <person name="Brinkac L.M."/>
            <person name="Daugherty S.C."/>
            <person name="DeBoy R.T."/>
            <person name="Durkin A.S."/>
            <person name="Gwinn Giglio M."/>
            <person name="Madupu R."/>
            <person name="Nelson W.C."/>
            <person name="Rosovitz M.J."/>
            <person name="Sullivan S.A."/>
            <person name="Crabtree J."/>
            <person name="Creasy T."/>
            <person name="Davidsen T.M."/>
            <person name="Haft D.H."/>
            <person name="Zafar N."/>
            <person name="Zhou L."/>
            <person name="Halpin R."/>
            <person name="Holley T."/>
            <person name="Khouri H.M."/>
            <person name="Feldblyum T.V."/>
            <person name="White O."/>
            <person name="Fraser C.M."/>
            <person name="Chatterjee A.K."/>
            <person name="Cartinhour S."/>
            <person name="Schneider D."/>
            <person name="Mansfield J.W."/>
            <person name="Collmer A."/>
            <person name="Buell R."/>
        </authorList>
    </citation>
    <scope>NUCLEOTIDE SEQUENCE [LARGE SCALE GENOMIC DNA]</scope>
    <source>
        <strain>1448A / Race 6</strain>
    </source>
</reference>
<dbReference type="EC" id="2.4.2.9" evidence="1"/>
<dbReference type="EMBL" id="CP000058">
    <property type="protein sequence ID" value="AAZ34977.1"/>
    <property type="molecule type" value="Genomic_DNA"/>
</dbReference>
<dbReference type="RefSeq" id="WP_002552170.1">
    <property type="nucleotide sequence ID" value="NC_005773.3"/>
</dbReference>
<dbReference type="SMR" id="Q48MT3"/>
<dbReference type="GeneID" id="73734093"/>
<dbReference type="KEGG" id="psp:PSPPH_1018"/>
<dbReference type="eggNOG" id="COG0035">
    <property type="taxonomic scope" value="Bacteria"/>
</dbReference>
<dbReference type="HOGENOM" id="CLU_067096_2_2_6"/>
<dbReference type="UniPathway" id="UPA00574">
    <property type="reaction ID" value="UER00636"/>
</dbReference>
<dbReference type="Proteomes" id="UP000000551">
    <property type="component" value="Chromosome"/>
</dbReference>
<dbReference type="GO" id="GO:0005525">
    <property type="term" value="F:GTP binding"/>
    <property type="evidence" value="ECO:0007669"/>
    <property type="project" value="UniProtKB-KW"/>
</dbReference>
<dbReference type="GO" id="GO:0000287">
    <property type="term" value="F:magnesium ion binding"/>
    <property type="evidence" value="ECO:0007669"/>
    <property type="project" value="UniProtKB-UniRule"/>
</dbReference>
<dbReference type="GO" id="GO:0004845">
    <property type="term" value="F:uracil phosphoribosyltransferase activity"/>
    <property type="evidence" value="ECO:0007669"/>
    <property type="project" value="UniProtKB-UniRule"/>
</dbReference>
<dbReference type="GO" id="GO:0044206">
    <property type="term" value="P:UMP salvage"/>
    <property type="evidence" value="ECO:0007669"/>
    <property type="project" value="UniProtKB-UniRule"/>
</dbReference>
<dbReference type="GO" id="GO:0006223">
    <property type="term" value="P:uracil salvage"/>
    <property type="evidence" value="ECO:0007669"/>
    <property type="project" value="InterPro"/>
</dbReference>
<dbReference type="CDD" id="cd06223">
    <property type="entry name" value="PRTases_typeI"/>
    <property type="match status" value="1"/>
</dbReference>
<dbReference type="FunFam" id="3.40.50.2020:FF:000003">
    <property type="entry name" value="Uracil phosphoribosyltransferase"/>
    <property type="match status" value="1"/>
</dbReference>
<dbReference type="Gene3D" id="3.40.50.2020">
    <property type="match status" value="1"/>
</dbReference>
<dbReference type="HAMAP" id="MF_01218_B">
    <property type="entry name" value="Upp_B"/>
    <property type="match status" value="1"/>
</dbReference>
<dbReference type="InterPro" id="IPR000836">
    <property type="entry name" value="PRibTrfase_dom"/>
</dbReference>
<dbReference type="InterPro" id="IPR029057">
    <property type="entry name" value="PRTase-like"/>
</dbReference>
<dbReference type="InterPro" id="IPR034332">
    <property type="entry name" value="Upp_B"/>
</dbReference>
<dbReference type="InterPro" id="IPR050054">
    <property type="entry name" value="UPRTase/APRTase"/>
</dbReference>
<dbReference type="InterPro" id="IPR005765">
    <property type="entry name" value="Ura_phspho_trans"/>
</dbReference>
<dbReference type="NCBIfam" id="NF001097">
    <property type="entry name" value="PRK00129.1"/>
    <property type="match status" value="1"/>
</dbReference>
<dbReference type="NCBIfam" id="TIGR01091">
    <property type="entry name" value="upp"/>
    <property type="match status" value="1"/>
</dbReference>
<dbReference type="PANTHER" id="PTHR32315">
    <property type="entry name" value="ADENINE PHOSPHORIBOSYLTRANSFERASE"/>
    <property type="match status" value="1"/>
</dbReference>
<dbReference type="PANTHER" id="PTHR32315:SF4">
    <property type="entry name" value="URACIL PHOSPHORIBOSYLTRANSFERASE, CHLOROPLASTIC"/>
    <property type="match status" value="1"/>
</dbReference>
<dbReference type="Pfam" id="PF14681">
    <property type="entry name" value="UPRTase"/>
    <property type="match status" value="1"/>
</dbReference>
<dbReference type="SUPFAM" id="SSF53271">
    <property type="entry name" value="PRTase-like"/>
    <property type="match status" value="1"/>
</dbReference>
<feature type="chain" id="PRO_1000053757" description="Uracil phosphoribosyltransferase">
    <location>
        <begin position="1"/>
        <end position="212"/>
    </location>
</feature>
<feature type="binding site" evidence="1">
    <location>
        <position position="78"/>
    </location>
    <ligand>
        <name>5-phospho-alpha-D-ribose 1-diphosphate</name>
        <dbReference type="ChEBI" id="CHEBI:58017"/>
    </ligand>
</feature>
<feature type="binding site" evidence="1">
    <location>
        <position position="103"/>
    </location>
    <ligand>
        <name>5-phospho-alpha-D-ribose 1-diphosphate</name>
        <dbReference type="ChEBI" id="CHEBI:58017"/>
    </ligand>
</feature>
<feature type="binding site" evidence="1">
    <location>
        <begin position="130"/>
        <end position="138"/>
    </location>
    <ligand>
        <name>5-phospho-alpha-D-ribose 1-diphosphate</name>
        <dbReference type="ChEBI" id="CHEBI:58017"/>
    </ligand>
</feature>
<feature type="binding site" evidence="1">
    <location>
        <position position="193"/>
    </location>
    <ligand>
        <name>uracil</name>
        <dbReference type="ChEBI" id="CHEBI:17568"/>
    </ligand>
</feature>
<feature type="binding site" evidence="1">
    <location>
        <begin position="198"/>
        <end position="200"/>
    </location>
    <ligand>
        <name>uracil</name>
        <dbReference type="ChEBI" id="CHEBI:17568"/>
    </ligand>
</feature>
<feature type="binding site" evidence="1">
    <location>
        <position position="199"/>
    </location>
    <ligand>
        <name>5-phospho-alpha-D-ribose 1-diphosphate</name>
        <dbReference type="ChEBI" id="CHEBI:58017"/>
    </ligand>
</feature>
<sequence>MPIREIRHPLIRHKLGLMRRADISTKNFRELAQEVGALLTYEATADLTLENYDIQGWAGTVSVEKIAGKKITVVPILRAGIGMLDGVLSLIPGAKVSAVGVARNEETLQAHTYLEKLVPEIDERLAMIIDPMLATGSSMVATIDLLKKAGCKEIRAMVLVAAPEGIAAVEKAHPDVMIYTASIDERLNEHGYIIPGLGDAGDKIFGTKQKDA</sequence>
<name>UPP_PSE14</name>
<organism>
    <name type="scientific">Pseudomonas savastanoi pv. phaseolicola (strain 1448A / Race 6)</name>
    <name type="common">Pseudomonas syringae pv. phaseolicola (strain 1448A / Race 6)</name>
    <dbReference type="NCBI Taxonomy" id="264730"/>
    <lineage>
        <taxon>Bacteria</taxon>
        <taxon>Pseudomonadati</taxon>
        <taxon>Pseudomonadota</taxon>
        <taxon>Gammaproteobacteria</taxon>
        <taxon>Pseudomonadales</taxon>
        <taxon>Pseudomonadaceae</taxon>
        <taxon>Pseudomonas</taxon>
    </lineage>
</organism>
<evidence type="ECO:0000255" key="1">
    <source>
        <dbReference type="HAMAP-Rule" id="MF_01218"/>
    </source>
</evidence>
<proteinExistence type="inferred from homology"/>